<comment type="function">
    <text evidence="1">Catalyzes the condensation of ATP and 5-phosphoribose 1-diphosphate to form N'-(5'-phosphoribosyl)-ATP (PR-ATP). Has a crucial role in the pathway because the rate of histidine biosynthesis seems to be controlled primarily by regulation of HisG enzymatic activity (By similarity).</text>
</comment>
<comment type="catalytic activity">
    <reaction>
        <text>1-(5-phospho-beta-D-ribosyl)-ATP + diphosphate = 5-phospho-alpha-D-ribose 1-diphosphate + ATP</text>
        <dbReference type="Rhea" id="RHEA:18473"/>
        <dbReference type="ChEBI" id="CHEBI:30616"/>
        <dbReference type="ChEBI" id="CHEBI:33019"/>
        <dbReference type="ChEBI" id="CHEBI:58017"/>
        <dbReference type="ChEBI" id="CHEBI:73183"/>
        <dbReference type="EC" id="2.4.2.17"/>
    </reaction>
</comment>
<comment type="pathway">
    <text>Amino-acid biosynthesis; L-histidine biosynthesis; L-histidine from 5-phospho-alpha-D-ribose 1-diphosphate: step 1/9.</text>
</comment>
<comment type="subunit">
    <text evidence="1">Heteromultimer composed of HisG and HisZ subunits.</text>
</comment>
<comment type="subcellular location">
    <subcellularLocation>
        <location evidence="1">Cytoplasm</location>
    </subcellularLocation>
</comment>
<comment type="domain">
    <text>Lacks the C-terminal regulatory region which is replaced by HisZ.</text>
</comment>
<comment type="similarity">
    <text evidence="2">Belongs to the ATP phosphoribosyltransferase family. Short subfamily.</text>
</comment>
<gene>
    <name type="primary">hisG</name>
    <name type="ordered locus">PA4449</name>
</gene>
<name>HIS1_PSEAE</name>
<sequence length="211" mass="22845">MLTIALSKGRILDDTLPLLAAAGIVPSENPDKSRKLIIPTSLSDVRLLIVRATDVPTYVEHGAADLGVAGKDVLMEYGGQGLYEPLDLRIANCKLMTAGAIGAPEPKGRLRVATKFVNVAKRYYAEQGRQVDVIKLYGSMELAPLVGLADKIIDVVDTGNTLRANGLEPQELIATISSRLVVNKASMKMQHGRIQSLIDTLRDAVEARHRH</sequence>
<feature type="chain" id="PRO_0000151925" description="ATP phosphoribosyltransferase">
    <location>
        <begin position="1"/>
        <end position="211"/>
    </location>
</feature>
<reference key="1">
    <citation type="journal article" date="2000" name="Nature">
        <title>Complete genome sequence of Pseudomonas aeruginosa PAO1, an opportunistic pathogen.</title>
        <authorList>
            <person name="Stover C.K."/>
            <person name="Pham X.-Q.T."/>
            <person name="Erwin A.L."/>
            <person name="Mizoguchi S.D."/>
            <person name="Warrener P."/>
            <person name="Hickey M.J."/>
            <person name="Brinkman F.S.L."/>
            <person name="Hufnagle W.O."/>
            <person name="Kowalik D.J."/>
            <person name="Lagrou M."/>
            <person name="Garber R.L."/>
            <person name="Goltry L."/>
            <person name="Tolentino E."/>
            <person name="Westbrock-Wadman S."/>
            <person name="Yuan Y."/>
            <person name="Brody L.L."/>
            <person name="Coulter S.N."/>
            <person name="Folger K.R."/>
            <person name="Kas A."/>
            <person name="Larbig K."/>
            <person name="Lim R.M."/>
            <person name="Smith K.A."/>
            <person name="Spencer D.H."/>
            <person name="Wong G.K.-S."/>
            <person name="Wu Z."/>
            <person name="Paulsen I.T."/>
            <person name="Reizer J."/>
            <person name="Saier M.H. Jr."/>
            <person name="Hancock R.E.W."/>
            <person name="Lory S."/>
            <person name="Olson M.V."/>
        </authorList>
    </citation>
    <scope>NUCLEOTIDE SEQUENCE [LARGE SCALE GENOMIC DNA]</scope>
    <source>
        <strain>ATCC 15692 / DSM 22644 / CIP 104116 / JCM 14847 / LMG 12228 / 1C / PRS 101 / PAO1</strain>
    </source>
</reference>
<protein>
    <recommendedName>
        <fullName>ATP phosphoribosyltransferase</fullName>
        <shortName>ATP-PRT</shortName>
        <shortName>ATP-PRTase</shortName>
        <ecNumber>2.4.2.17</ecNumber>
    </recommendedName>
</protein>
<organism>
    <name type="scientific">Pseudomonas aeruginosa (strain ATCC 15692 / DSM 22644 / CIP 104116 / JCM 14847 / LMG 12228 / 1C / PRS 101 / PAO1)</name>
    <dbReference type="NCBI Taxonomy" id="208964"/>
    <lineage>
        <taxon>Bacteria</taxon>
        <taxon>Pseudomonadati</taxon>
        <taxon>Pseudomonadota</taxon>
        <taxon>Gammaproteobacteria</taxon>
        <taxon>Pseudomonadales</taxon>
        <taxon>Pseudomonadaceae</taxon>
        <taxon>Pseudomonas</taxon>
    </lineage>
</organism>
<proteinExistence type="inferred from homology"/>
<accession>Q9HVW8</accession>
<dbReference type="EC" id="2.4.2.17"/>
<dbReference type="EMBL" id="AE004091">
    <property type="protein sequence ID" value="AAG07837.1"/>
    <property type="molecule type" value="Genomic_DNA"/>
</dbReference>
<dbReference type="PIR" id="E83089">
    <property type="entry name" value="E83089"/>
</dbReference>
<dbReference type="RefSeq" id="NP_253139.1">
    <property type="nucleotide sequence ID" value="NC_002516.2"/>
</dbReference>
<dbReference type="RefSeq" id="WP_003098837.1">
    <property type="nucleotide sequence ID" value="NZ_QZGE01000004.1"/>
</dbReference>
<dbReference type="SMR" id="Q9HVW8"/>
<dbReference type="FunCoup" id="Q9HVW8">
    <property type="interactions" value="580"/>
</dbReference>
<dbReference type="STRING" id="208964.PA4449"/>
<dbReference type="PaxDb" id="208964-PA4449"/>
<dbReference type="DNASU" id="880968"/>
<dbReference type="GeneID" id="880968"/>
<dbReference type="KEGG" id="pae:PA4449"/>
<dbReference type="PATRIC" id="fig|208964.12.peg.4659"/>
<dbReference type="PseudoCAP" id="PA4449"/>
<dbReference type="HOGENOM" id="CLU_038115_2_0_6"/>
<dbReference type="InParanoid" id="Q9HVW8"/>
<dbReference type="OrthoDB" id="9801867at2"/>
<dbReference type="PhylomeDB" id="Q9HVW8"/>
<dbReference type="BioCyc" id="PAER208964:G1FZ6-4537-MONOMER"/>
<dbReference type="UniPathway" id="UPA00031">
    <property type="reaction ID" value="UER00006"/>
</dbReference>
<dbReference type="Proteomes" id="UP000002438">
    <property type="component" value="Chromosome"/>
</dbReference>
<dbReference type="GO" id="GO:0005737">
    <property type="term" value="C:cytoplasm"/>
    <property type="evidence" value="ECO:0007669"/>
    <property type="project" value="UniProtKB-SubCell"/>
</dbReference>
<dbReference type="GO" id="GO:0005524">
    <property type="term" value="F:ATP binding"/>
    <property type="evidence" value="ECO:0007669"/>
    <property type="project" value="UniProtKB-KW"/>
</dbReference>
<dbReference type="GO" id="GO:0003879">
    <property type="term" value="F:ATP phosphoribosyltransferase activity"/>
    <property type="evidence" value="ECO:0000318"/>
    <property type="project" value="GO_Central"/>
</dbReference>
<dbReference type="GO" id="GO:0000105">
    <property type="term" value="P:L-histidine biosynthetic process"/>
    <property type="evidence" value="ECO:0000318"/>
    <property type="project" value="GO_Central"/>
</dbReference>
<dbReference type="CDD" id="cd13595">
    <property type="entry name" value="PBP2_HisGs"/>
    <property type="match status" value="1"/>
</dbReference>
<dbReference type="FunFam" id="3.40.190.10:FF:000011">
    <property type="entry name" value="ATP phosphoribosyltransferase"/>
    <property type="match status" value="1"/>
</dbReference>
<dbReference type="FunFam" id="3.40.190.10:FF:000022">
    <property type="entry name" value="ATP phosphoribosyltransferase"/>
    <property type="match status" value="1"/>
</dbReference>
<dbReference type="Gene3D" id="3.40.190.10">
    <property type="entry name" value="Periplasmic binding protein-like II"/>
    <property type="match status" value="2"/>
</dbReference>
<dbReference type="HAMAP" id="MF_01018">
    <property type="entry name" value="HisG_Short"/>
    <property type="match status" value="1"/>
</dbReference>
<dbReference type="InterPro" id="IPR013820">
    <property type="entry name" value="ATP_PRibTrfase_cat"/>
</dbReference>
<dbReference type="InterPro" id="IPR018198">
    <property type="entry name" value="ATP_PRibTrfase_CS"/>
</dbReference>
<dbReference type="InterPro" id="IPR001348">
    <property type="entry name" value="ATP_PRibTrfase_HisG"/>
</dbReference>
<dbReference type="InterPro" id="IPR024893">
    <property type="entry name" value="ATP_PRibTrfase_HisG_short"/>
</dbReference>
<dbReference type="NCBIfam" id="TIGR00070">
    <property type="entry name" value="hisG"/>
    <property type="match status" value="1"/>
</dbReference>
<dbReference type="PANTHER" id="PTHR21403:SF8">
    <property type="entry name" value="ATP PHOSPHORIBOSYLTRANSFERASE"/>
    <property type="match status" value="1"/>
</dbReference>
<dbReference type="PANTHER" id="PTHR21403">
    <property type="entry name" value="ATP PHOSPHORIBOSYLTRANSFERASE ATP-PRTASE"/>
    <property type="match status" value="1"/>
</dbReference>
<dbReference type="Pfam" id="PF01634">
    <property type="entry name" value="HisG"/>
    <property type="match status" value="1"/>
</dbReference>
<dbReference type="SUPFAM" id="SSF53850">
    <property type="entry name" value="Periplasmic binding protein-like II"/>
    <property type="match status" value="1"/>
</dbReference>
<dbReference type="PROSITE" id="PS01316">
    <property type="entry name" value="ATP_P_PHORIBOSYLTR"/>
    <property type="match status" value="1"/>
</dbReference>
<evidence type="ECO:0000250" key="1"/>
<evidence type="ECO:0000305" key="2"/>
<keyword id="KW-0028">Amino-acid biosynthesis</keyword>
<keyword id="KW-0067">ATP-binding</keyword>
<keyword id="KW-0963">Cytoplasm</keyword>
<keyword id="KW-0328">Glycosyltransferase</keyword>
<keyword id="KW-0368">Histidine biosynthesis</keyword>
<keyword id="KW-0547">Nucleotide-binding</keyword>
<keyword id="KW-1185">Reference proteome</keyword>
<keyword id="KW-0808">Transferase</keyword>